<proteinExistence type="inferred from homology"/>
<protein>
    <recommendedName>
        <fullName>Putative S-adenosyl-L-methionine-dependent methyltransferase MUL_0816</fullName>
        <ecNumber>2.1.1.-</ecNumber>
    </recommendedName>
</protein>
<dbReference type="EC" id="2.1.1.-"/>
<dbReference type="EMBL" id="CP000325">
    <property type="protein sequence ID" value="ABL03456.1"/>
    <property type="molecule type" value="Genomic_DNA"/>
</dbReference>
<dbReference type="RefSeq" id="WP_011739081.1">
    <property type="nucleotide sequence ID" value="NC_008611.1"/>
</dbReference>
<dbReference type="SMR" id="A0PM87"/>
<dbReference type="KEGG" id="mul:MUL_0816"/>
<dbReference type="eggNOG" id="COG3315">
    <property type="taxonomic scope" value="Bacteria"/>
</dbReference>
<dbReference type="HOGENOM" id="CLU_056160_2_1_11"/>
<dbReference type="Proteomes" id="UP000000765">
    <property type="component" value="Chromosome"/>
</dbReference>
<dbReference type="GO" id="GO:0008168">
    <property type="term" value="F:methyltransferase activity"/>
    <property type="evidence" value="ECO:0007669"/>
    <property type="project" value="UniProtKB-KW"/>
</dbReference>
<dbReference type="GO" id="GO:0032259">
    <property type="term" value="P:methylation"/>
    <property type="evidence" value="ECO:0007669"/>
    <property type="project" value="UniProtKB-KW"/>
</dbReference>
<dbReference type="FunFam" id="3.40.50.150:FF:000152">
    <property type="entry name" value="S-adenosyl-L-methionine-dependent methyltransferase"/>
    <property type="match status" value="1"/>
</dbReference>
<dbReference type="Gene3D" id="3.40.50.150">
    <property type="entry name" value="Vaccinia Virus protein VP39"/>
    <property type="match status" value="1"/>
</dbReference>
<dbReference type="InterPro" id="IPR007213">
    <property type="entry name" value="Ppm1/Ppm2/Tcmp"/>
</dbReference>
<dbReference type="InterPro" id="IPR029063">
    <property type="entry name" value="SAM-dependent_MTases_sf"/>
</dbReference>
<dbReference type="InterPro" id="IPR011610">
    <property type="entry name" value="SAM_mthyl_Trfase_ML2640-like"/>
</dbReference>
<dbReference type="NCBIfam" id="TIGR00027">
    <property type="entry name" value="mthyl_TIGR00027"/>
    <property type="match status" value="1"/>
</dbReference>
<dbReference type="PANTHER" id="PTHR43619">
    <property type="entry name" value="S-ADENOSYL-L-METHIONINE-DEPENDENT METHYLTRANSFERASE YKTD-RELATED"/>
    <property type="match status" value="1"/>
</dbReference>
<dbReference type="PANTHER" id="PTHR43619:SF2">
    <property type="entry name" value="S-ADENOSYL-L-METHIONINE-DEPENDENT METHYLTRANSFERASES SUPERFAMILY PROTEIN"/>
    <property type="match status" value="1"/>
</dbReference>
<dbReference type="Pfam" id="PF04072">
    <property type="entry name" value="LCM"/>
    <property type="match status" value="1"/>
</dbReference>
<dbReference type="SUPFAM" id="SSF53335">
    <property type="entry name" value="S-adenosyl-L-methionine-dependent methyltransferases"/>
    <property type="match status" value="1"/>
</dbReference>
<comment type="function">
    <text evidence="1">Exhibits S-adenosyl-L-methionine-dependent methyltransferase activity.</text>
</comment>
<comment type="similarity">
    <text evidence="2">Belongs to the UPF0677 family.</text>
</comment>
<organism>
    <name type="scientific">Mycobacterium ulcerans (strain Agy99)</name>
    <dbReference type="NCBI Taxonomy" id="362242"/>
    <lineage>
        <taxon>Bacteria</taxon>
        <taxon>Bacillati</taxon>
        <taxon>Actinomycetota</taxon>
        <taxon>Actinomycetes</taxon>
        <taxon>Mycobacteriales</taxon>
        <taxon>Mycobacteriaceae</taxon>
        <taxon>Mycobacterium</taxon>
        <taxon>Mycobacterium ulcerans group</taxon>
    </lineage>
</organism>
<sequence>MARTHDDKWDLASSVGATATIVAAGRAMASRDPRGLIDDPFAEPLVRAVGVDFFIKMMDGEFDLSVLQNVSSAKAQAMVDGMAVRTKYFDDYFGDAIKSGIRQAVILASGLDARAYRLPWPADTVVYELDQPQVIEFKTNVLADLGAEPRATRRAIPIDLRGDWPVALRAAGLDTTAPTAWLAEGLLIYLPPEAQDRLFDNITALSAPGSTVATEFVPGIVDFDVDRARQMSGPFRDHGLDIDMSSLVYTGARNHVVDYLRAKGWDAEGVTRSKLFERNGMAVPAPSDDDPLGEIIFISAALTG</sequence>
<feature type="chain" id="PRO_0000361254" description="Putative S-adenosyl-L-methionine-dependent methyltransferase MUL_0816">
    <location>
        <begin position="1"/>
        <end position="304"/>
    </location>
</feature>
<feature type="binding site" evidence="1">
    <location>
        <position position="130"/>
    </location>
    <ligand>
        <name>S-adenosyl-L-methionine</name>
        <dbReference type="ChEBI" id="CHEBI:59789"/>
    </ligand>
</feature>
<feature type="binding site" evidence="1">
    <location>
        <begin position="159"/>
        <end position="160"/>
    </location>
    <ligand>
        <name>S-adenosyl-L-methionine</name>
        <dbReference type="ChEBI" id="CHEBI:59789"/>
    </ligand>
</feature>
<evidence type="ECO:0000250" key="1"/>
<evidence type="ECO:0000305" key="2"/>
<gene>
    <name type="ordered locus">MUL_0816</name>
</gene>
<keyword id="KW-0489">Methyltransferase</keyword>
<keyword id="KW-0949">S-adenosyl-L-methionine</keyword>
<keyword id="KW-0808">Transferase</keyword>
<accession>A0PM87</accession>
<reference key="1">
    <citation type="journal article" date="2007" name="Genome Res.">
        <title>Reductive evolution and niche adaptation inferred from the genome of Mycobacterium ulcerans, the causative agent of Buruli ulcer.</title>
        <authorList>
            <person name="Stinear T.P."/>
            <person name="Seemann T."/>
            <person name="Pidot S."/>
            <person name="Frigui W."/>
            <person name="Reysset G."/>
            <person name="Garnier T."/>
            <person name="Meurice G."/>
            <person name="Simon D."/>
            <person name="Bouchier C."/>
            <person name="Ma L."/>
            <person name="Tichit M."/>
            <person name="Porter J.L."/>
            <person name="Ryan J."/>
            <person name="Johnson P.D.R."/>
            <person name="Davies J.K."/>
            <person name="Jenkin G.A."/>
            <person name="Small P.L.C."/>
            <person name="Jones L.M."/>
            <person name="Tekaia F."/>
            <person name="Laval F."/>
            <person name="Daffe M."/>
            <person name="Parkhill J."/>
            <person name="Cole S.T."/>
        </authorList>
    </citation>
    <scope>NUCLEOTIDE SEQUENCE [LARGE SCALE GENOMIC DNA]</scope>
    <source>
        <strain>Agy99</strain>
    </source>
</reference>
<name>Y816_MYCUA</name>